<keyword id="KW-0175">Coiled coil</keyword>
<keyword id="KW-0200">Cytadherence</keyword>
<keyword id="KW-1185">Reference proteome</keyword>
<keyword id="KW-0843">Virulence</keyword>
<proteinExistence type="inferred from homology"/>
<sequence length="1931" mass="229935">MQKDYMKLHSNSDFDADQLDEHDDNVFQDVYDTGFDDGYIKANQENLIANQYKKLDKNSYQNGNNSFYTKDELEKLKKQSFQVNQDIDYYQQAQTEISSERQRLLQAIDDLEANQDQFHPEDFQAERQYLINELDRLDSELYHIEQYKNDSIDFVNELNQRLSAEQAKIDSYNSSLDKNIRKDYIQIDQLKNKLAEETTEYNDLLNRSTDEISEIDRQSERLQNLIDERIAKLNNDSYGVSSLDSSTRERLKKEIHDLSEQRKKLQSAKKLHLYNLNLKKESIRRYRSQLEQYLESLKQMRNEHNKKLKGYAQNLDNIKNEVEKAKQNFNDQQLKILQSKANADQYFALRKIELENSYKKAKNAILEANKAHAKNVQEEQALANKNNKTQRLLNKLKEDYDRLKIASLSFESMRKQSLAALNNLQDELKQKHNLLERKKHEQDGIVNEKISELEGYRSDLVDQKLKIEREKENQERRYKAAEASLNKKRQEIDELFLEANTKLNEASLKENDLNNQKREILAKLRNLEHLKSEIDQRRRDLDQRELIDQQTIRKIQLDVESERADLQRILLIERKKNDERQQELLQYERDIKRQQTDFENTVNWEQKKLSQREKELKDGYEQLQLKQSEVQEKIDELNEEINRAQKSKQNSLVLEQKLKSDLEHLNLSKNYLDKQQEELNQKSDKMIEDLKVFERDLKRQKEDLSIYEKSLQQKEASLINFQNDVTVQKNEAYHKAQAIHQELELKKAAIENELRKLTAERKAVDADKEENTKLKKFIDEEIRSLANERKELEIYQNNIENFKNNAVDRLNVLESDLVKKRNELEQLKKEQQTHYNELNSNLTNELQELEEQKKKFAHQKQQKFEELLQAKNNLSIKENELVLYAQKVNDRYNELKAIEKSNTAKSEMINAKLEEFKHAEIDYLNYQNKIKQEQIKFDNQVKILESQYNQRNEILLIREEQIKQKKAEQQAQEKQIQKDFKRLQEEKNNFDDQKRNKFNKISNLYLEIKKQRDEVDLAQRQIEDQKEELLIKAREGRLQKQEIEDRLAVLEKSEKRFRQEDELLAKKRIDLIERIGVLKADINKKHEILSLRSVQLTEKAKKQQEKDADLQRKFDLLESEVERFNEEKKSEFQKLKVERDKLAHREKNVSKNMNEINLALAKLDLIRKNNKVDKAKINEKLALLNDQKEKIDRENDLLDAKKTEVITRLRKMENDLEFEKQKVLLDRSNIERISSDQQALARELETKYQTLEREKRSFSQRKENELKEIDDFYQQVQHKERTLNLKIEDLKQLRYLLEKESYNVNVNKKDLKVRIEHYQRLERAIKNEQHKLNNQKNNFFNKVELLNDQLNKKSSKIALLRSKIYNTYKQQQQQKQILLEEKHKNSQLRKSLLKTQEELHQQKAQFSIAKKQEEKKLKNQKDLIQNTLSEVIKQKDQITNIKQEVDLKQTQLNNLEKLIIKQRADLQKELEKNSENTYRLQKAERLLEEKKTKLRLEYDKAKKVLSTAKATDQALKTKQAKVQDQFKKLVLINKKIIEARNNLLKQRNIIQKEINNRNMANFQNPYPNFLNLAPNTQVVPAQTIMPVQTPQLVGVNYPNQPAFDFNNPLMQMQQLINQQQMLMMQKEHQWALEEANKKNSRLAKQLKQLKHHKQALTESTSEHLNYHNLLNADNSYKINSLQNLLSKVAYNTKRRINQLEHNLDPETADLNQLHELNANSQLLDEIRTVLSNTTTNTNAVVPANSYSKELRMLFDEIKADFKKQAVLFNTQKEVFTNQINQLAQAVEQGPIEVRKTLESQDQKYQQMFDNFRDAYEQNISLLRNENNEVQKKLTDLYDEIAAIKTNTEKIKKTTLRPEVRNNANEGLASFNSVNRDKKDYLDQTLPVHQNLRIDLNQNRDLSHAKKERINQLANEIKTIKELIEKRKQTSL</sequence>
<feature type="chain" id="PRO_0000380120" description="Cytadherence high molecular weight protein 2">
    <location>
        <begin position="1"/>
        <end position="1931"/>
    </location>
</feature>
<feature type="coiled-coil region" evidence="2">
    <location>
        <begin position="1626"/>
        <end position="1659"/>
    </location>
</feature>
<feature type="coiled-coil region" evidence="2">
    <location>
        <begin position="1768"/>
        <end position="1846"/>
    </location>
</feature>
<feature type="coiled-coil region" evidence="2">
    <location>
        <begin position="1903"/>
        <end position="1930"/>
    </location>
</feature>
<evidence type="ECO:0000250" key="1"/>
<evidence type="ECO:0000255" key="2"/>
<comment type="function">
    <text evidence="1">Component of the cytoskeleton-like structure which stabilizes the shape of the wall-less Mycoplasma. This cytoskeleton-like network of accessory proteins containing HMW proteins 1 to 5 allows the proper anchoring of cytadhesin proteins in the mycoplasmal membrane at the attachment organelle (By similarity).</text>
</comment>
<accession>Q7NBF8</accession>
<reference key="1">
    <citation type="journal article" date="2003" name="Microbiology">
        <title>The complete genome sequence of the avian pathogen Mycoplasma gallisepticum strain R(low).</title>
        <authorList>
            <person name="Papazisi L."/>
            <person name="Gorton T.S."/>
            <person name="Kutish G."/>
            <person name="Markham P.F."/>
            <person name="Browning G.F."/>
            <person name="Nguyen D.K."/>
            <person name="Swartzell S."/>
            <person name="Madan A."/>
            <person name="Mahairas G."/>
            <person name="Geary S.J."/>
        </authorList>
    </citation>
    <scope>NUCLEOTIDE SEQUENCE [LARGE SCALE GENOMIC DNA]</scope>
    <source>
        <strain>R(low / passage 15 / clone 2)</strain>
    </source>
</reference>
<dbReference type="EMBL" id="AE015450">
    <property type="protein sequence ID" value="AAP56671.1"/>
    <property type="molecule type" value="Genomic_DNA"/>
</dbReference>
<dbReference type="RefSeq" id="WP_011113563.1">
    <property type="nucleotide sequence ID" value="NC_004829.2"/>
</dbReference>
<dbReference type="SMR" id="Q7NBF8"/>
<dbReference type="GeneID" id="93510153"/>
<dbReference type="KEGG" id="mga:MGA_1203"/>
<dbReference type="PATRIC" id="fig|233150.7.peg.357"/>
<dbReference type="HOGENOM" id="CLU_235185_0_0_14"/>
<dbReference type="OrthoDB" id="398247at2"/>
<dbReference type="Proteomes" id="UP000001418">
    <property type="component" value="Chromosome"/>
</dbReference>
<dbReference type="GO" id="GO:0020035">
    <property type="term" value="P:adhesion of symbiont to microvasculature"/>
    <property type="evidence" value="ECO:0007669"/>
    <property type="project" value="UniProtKB-KW"/>
</dbReference>
<dbReference type="InterPro" id="IPR016430">
    <property type="entry name" value="Cytadherence_Hmw2"/>
</dbReference>
<dbReference type="PIRSF" id="PIRSF004800">
    <property type="entry name" value="Hmw2"/>
    <property type="match status" value="1"/>
</dbReference>
<protein>
    <recommendedName>
        <fullName>Cytadherence high molecular weight protein 2</fullName>
    </recommendedName>
    <alternativeName>
        <fullName>Cytadherence accessory protein 2</fullName>
    </alternativeName>
</protein>
<gene>
    <name type="primary">hlp2</name>
    <name type="synonym">hmw2</name>
    <name type="ordered locus">MYCGA3210</name>
    <name type="ORF">MGA_1203</name>
</gene>
<name>HMW2_MYCGA</name>
<organism>
    <name type="scientific">Mycoplasmoides gallisepticum (strain R(low / passage 15 / clone 2))</name>
    <name type="common">Mycoplasma gallisepticum</name>
    <dbReference type="NCBI Taxonomy" id="710127"/>
    <lineage>
        <taxon>Bacteria</taxon>
        <taxon>Bacillati</taxon>
        <taxon>Mycoplasmatota</taxon>
        <taxon>Mycoplasmoidales</taxon>
        <taxon>Mycoplasmoidaceae</taxon>
        <taxon>Mycoplasmoides</taxon>
    </lineage>
</organism>